<comment type="subcellular location">
    <subcellularLocation>
        <location evidence="1">Cell membrane</location>
        <topology evidence="1">Single-pass type I membrane protein</topology>
    </subcellularLocation>
    <subcellularLocation>
        <location evidence="1">Secreted</location>
    </subcellularLocation>
</comment>
<comment type="similarity">
    <text evidence="3">Belongs to the SECTM family.</text>
</comment>
<reference evidence="4" key="1">
    <citation type="journal article" date="2004" name="Genome Res.">
        <title>The status, quality, and expansion of the NIH full-length cDNA project: the Mammalian Gene Collection (MGC).</title>
        <authorList>
            <consortium name="The MGC Project Team"/>
        </authorList>
    </citation>
    <scope>NUCLEOTIDE SEQUENCE [LARGE SCALE MRNA]</scope>
    <source>
        <strain evidence="4">FVB/N</strain>
        <tissue evidence="4">Mammary gland</tissue>
    </source>
</reference>
<name>SCT1A_MOUSE</name>
<evidence type="ECO:0000250" key="1"/>
<evidence type="ECO:0000255" key="2"/>
<evidence type="ECO:0000305" key="3"/>
<evidence type="ECO:0000312" key="4">
    <source>
        <dbReference type="EMBL" id="AAH10462.1"/>
    </source>
</evidence>
<evidence type="ECO:0000312" key="5">
    <source>
        <dbReference type="MGI" id="MGI:2384805"/>
    </source>
</evidence>
<gene>
    <name evidence="4 5" type="primary">Sectm1a</name>
</gene>
<organism>
    <name type="scientific">Mus musculus</name>
    <name type="common">Mouse</name>
    <dbReference type="NCBI Taxonomy" id="10090"/>
    <lineage>
        <taxon>Eukaryota</taxon>
        <taxon>Metazoa</taxon>
        <taxon>Chordata</taxon>
        <taxon>Craniata</taxon>
        <taxon>Vertebrata</taxon>
        <taxon>Euteleostomi</taxon>
        <taxon>Mammalia</taxon>
        <taxon>Eutheria</taxon>
        <taxon>Euarchontoglires</taxon>
        <taxon>Glires</taxon>
        <taxon>Rodentia</taxon>
        <taxon>Myomorpha</taxon>
        <taxon>Muroidea</taxon>
        <taxon>Muridae</taxon>
        <taxon>Murinae</taxon>
        <taxon>Mus</taxon>
        <taxon>Mus</taxon>
    </lineage>
</organism>
<proteinExistence type="evidence at transcript level"/>
<protein>
    <recommendedName>
        <fullName>Secreted and transmembrane protein 1A</fullName>
    </recommendedName>
</protein>
<sequence length="192" mass="21438">MMTCPSVPAIPTLWLFSILLLVVSLNAQNKSWDNPICTEGILSVPRGNPAVMTCNISNTFTDVTIQLSANGKDKTIFDKKPQGNFSWRGWELQVQGGQAQLVIKDTQDDHTGIYLWQLHGRQRCYKNITLNILEPSNEDKVPDTTLFTSFPDHAKSSPIEGKPGTLVGVITVIFILGVAGFITFIYYRHRRS</sequence>
<dbReference type="EMBL" id="BC010462">
    <property type="protein sequence ID" value="AAH10462.1"/>
    <property type="molecule type" value="mRNA"/>
</dbReference>
<dbReference type="CCDS" id="CCDS25766.1"/>
<dbReference type="SMR" id="Q921W8"/>
<dbReference type="FunCoup" id="Q921W8">
    <property type="interactions" value="64"/>
</dbReference>
<dbReference type="STRING" id="10090.ENSMUSP00000026162"/>
<dbReference type="GlyCosmos" id="Q921W8">
    <property type="glycosylation" value="4 sites, No reported glycans"/>
</dbReference>
<dbReference type="GlyGen" id="Q921W8">
    <property type="glycosylation" value="4 sites"/>
</dbReference>
<dbReference type="PhosphoSitePlus" id="Q921W8"/>
<dbReference type="CPTAC" id="non-CPTAC-4008"/>
<dbReference type="PaxDb" id="10090-ENSMUSP00000026162"/>
<dbReference type="PeptideAtlas" id="Q921W8"/>
<dbReference type="ProteomicsDB" id="253427"/>
<dbReference type="AGR" id="MGI:2384805"/>
<dbReference type="MGI" id="MGI:2384805">
    <property type="gene designation" value="Sectm1a"/>
</dbReference>
<dbReference type="eggNOG" id="ENOG502TM1B">
    <property type="taxonomic scope" value="Eukaryota"/>
</dbReference>
<dbReference type="InParanoid" id="Q921W8"/>
<dbReference type="OrthoDB" id="9451016at2759"/>
<dbReference type="PhylomeDB" id="Q921W8"/>
<dbReference type="ChiTaRS" id="Sectm1a">
    <property type="organism name" value="mouse"/>
</dbReference>
<dbReference type="PRO" id="PR:Q921W8"/>
<dbReference type="Proteomes" id="UP000000589">
    <property type="component" value="Unplaced"/>
</dbReference>
<dbReference type="RNAct" id="Q921W8">
    <property type="molecule type" value="protein"/>
</dbReference>
<dbReference type="GO" id="GO:0005576">
    <property type="term" value="C:extracellular region"/>
    <property type="evidence" value="ECO:0007669"/>
    <property type="project" value="UniProtKB-SubCell"/>
</dbReference>
<dbReference type="GO" id="GO:0005886">
    <property type="term" value="C:plasma membrane"/>
    <property type="evidence" value="ECO:0007669"/>
    <property type="project" value="UniProtKB-SubCell"/>
</dbReference>
<dbReference type="GO" id="GO:0005125">
    <property type="term" value="F:cytokine activity"/>
    <property type="evidence" value="ECO:0007669"/>
    <property type="project" value="InterPro"/>
</dbReference>
<dbReference type="GO" id="GO:0006955">
    <property type="term" value="P:immune response"/>
    <property type="evidence" value="ECO:0007669"/>
    <property type="project" value="InterPro"/>
</dbReference>
<dbReference type="Gene3D" id="2.60.40.10">
    <property type="entry name" value="Immunoglobulins"/>
    <property type="match status" value="1"/>
</dbReference>
<dbReference type="InterPro" id="IPR036179">
    <property type="entry name" value="Ig-like_dom_sf"/>
</dbReference>
<dbReference type="InterPro" id="IPR013783">
    <property type="entry name" value="Ig-like_fold"/>
</dbReference>
<dbReference type="InterPro" id="IPR033231">
    <property type="entry name" value="SECTM1"/>
</dbReference>
<dbReference type="PANTHER" id="PTHR15123">
    <property type="entry name" value="SECRETED AND TRANSMEMBRANE PROTEIN 1"/>
    <property type="match status" value="1"/>
</dbReference>
<dbReference type="PANTHER" id="PTHR15123:SF6">
    <property type="entry name" value="SECRETED AND TRANSMEMBRANE PROTEIN 1A"/>
    <property type="match status" value="1"/>
</dbReference>
<dbReference type="SUPFAM" id="SSF48726">
    <property type="entry name" value="Immunoglobulin"/>
    <property type="match status" value="1"/>
</dbReference>
<feature type="signal peptide" evidence="2">
    <location>
        <begin position="1"/>
        <end position="27"/>
    </location>
</feature>
<feature type="chain" id="PRO_0000271264" description="Secreted and transmembrane protein 1A" evidence="2">
    <location>
        <begin position="28"/>
        <end position="192"/>
    </location>
</feature>
<feature type="topological domain" description="Extracellular" evidence="2">
    <location>
        <begin position="28"/>
        <end position="165"/>
    </location>
</feature>
<feature type="transmembrane region" description="Helical" evidence="2">
    <location>
        <begin position="166"/>
        <end position="186"/>
    </location>
</feature>
<feature type="topological domain" description="Cytoplasmic" evidence="2">
    <location>
        <begin position="187"/>
        <end position="192"/>
    </location>
</feature>
<feature type="glycosylation site" description="N-linked (GlcNAc...) asparagine" evidence="2">
    <location>
        <position position="29"/>
    </location>
</feature>
<feature type="glycosylation site" description="N-linked (GlcNAc...) asparagine" evidence="2">
    <location>
        <position position="55"/>
    </location>
</feature>
<feature type="glycosylation site" description="N-linked (GlcNAc...) asparagine" evidence="2">
    <location>
        <position position="84"/>
    </location>
</feature>
<feature type="glycosylation site" description="N-linked (GlcNAc...) asparagine" evidence="2">
    <location>
        <position position="127"/>
    </location>
</feature>
<accession>Q921W8</accession>
<keyword id="KW-1003">Cell membrane</keyword>
<keyword id="KW-0325">Glycoprotein</keyword>
<keyword id="KW-0472">Membrane</keyword>
<keyword id="KW-1185">Reference proteome</keyword>
<keyword id="KW-0964">Secreted</keyword>
<keyword id="KW-0732">Signal</keyword>
<keyword id="KW-0812">Transmembrane</keyword>
<keyword id="KW-1133">Transmembrane helix</keyword>